<name>DNAK_CAMC5</name>
<proteinExistence type="inferred from homology"/>
<keyword id="KW-0067">ATP-binding</keyword>
<keyword id="KW-0143">Chaperone</keyword>
<keyword id="KW-0547">Nucleotide-binding</keyword>
<keyword id="KW-0597">Phosphoprotein</keyword>
<keyword id="KW-1185">Reference proteome</keyword>
<keyword id="KW-0346">Stress response</keyword>
<dbReference type="EMBL" id="CP000767">
    <property type="protein sequence ID" value="EAU00227.1"/>
    <property type="molecule type" value="Genomic_DNA"/>
</dbReference>
<dbReference type="SMR" id="A7GXU4"/>
<dbReference type="STRING" id="360105.CCV52592_0148"/>
<dbReference type="KEGG" id="ccv:CCV52592_0148"/>
<dbReference type="HOGENOM" id="CLU_005965_2_1_7"/>
<dbReference type="OrthoDB" id="9766019at2"/>
<dbReference type="Proteomes" id="UP000006380">
    <property type="component" value="Chromosome"/>
</dbReference>
<dbReference type="GO" id="GO:0005524">
    <property type="term" value="F:ATP binding"/>
    <property type="evidence" value="ECO:0007669"/>
    <property type="project" value="UniProtKB-UniRule"/>
</dbReference>
<dbReference type="GO" id="GO:0140662">
    <property type="term" value="F:ATP-dependent protein folding chaperone"/>
    <property type="evidence" value="ECO:0007669"/>
    <property type="project" value="InterPro"/>
</dbReference>
<dbReference type="GO" id="GO:0051082">
    <property type="term" value="F:unfolded protein binding"/>
    <property type="evidence" value="ECO:0007669"/>
    <property type="project" value="InterPro"/>
</dbReference>
<dbReference type="CDD" id="cd10234">
    <property type="entry name" value="ASKHA_NBD_HSP70_DnaK-like"/>
    <property type="match status" value="1"/>
</dbReference>
<dbReference type="FunFam" id="2.60.34.10:FF:000014">
    <property type="entry name" value="Chaperone protein DnaK HSP70"/>
    <property type="match status" value="1"/>
</dbReference>
<dbReference type="FunFam" id="1.20.1270.10:FF:000001">
    <property type="entry name" value="Molecular chaperone DnaK"/>
    <property type="match status" value="1"/>
</dbReference>
<dbReference type="FunFam" id="3.30.420.40:FF:000004">
    <property type="entry name" value="Molecular chaperone DnaK"/>
    <property type="match status" value="1"/>
</dbReference>
<dbReference type="FunFam" id="3.90.640.10:FF:000003">
    <property type="entry name" value="Molecular chaperone DnaK"/>
    <property type="match status" value="1"/>
</dbReference>
<dbReference type="Gene3D" id="1.20.1270.10">
    <property type="match status" value="1"/>
</dbReference>
<dbReference type="Gene3D" id="3.30.420.40">
    <property type="match status" value="2"/>
</dbReference>
<dbReference type="Gene3D" id="3.90.640.10">
    <property type="entry name" value="Actin, Chain A, domain 4"/>
    <property type="match status" value="1"/>
</dbReference>
<dbReference type="Gene3D" id="2.60.34.10">
    <property type="entry name" value="Substrate Binding Domain Of DNAk, Chain A, domain 1"/>
    <property type="match status" value="1"/>
</dbReference>
<dbReference type="HAMAP" id="MF_00332">
    <property type="entry name" value="DnaK"/>
    <property type="match status" value="1"/>
</dbReference>
<dbReference type="InterPro" id="IPR043129">
    <property type="entry name" value="ATPase_NBD"/>
</dbReference>
<dbReference type="InterPro" id="IPR012725">
    <property type="entry name" value="Chaperone_DnaK"/>
</dbReference>
<dbReference type="InterPro" id="IPR018181">
    <property type="entry name" value="Heat_shock_70_CS"/>
</dbReference>
<dbReference type="InterPro" id="IPR029048">
    <property type="entry name" value="HSP70_C_sf"/>
</dbReference>
<dbReference type="InterPro" id="IPR029047">
    <property type="entry name" value="HSP70_peptide-bd_sf"/>
</dbReference>
<dbReference type="InterPro" id="IPR013126">
    <property type="entry name" value="Hsp_70_fam"/>
</dbReference>
<dbReference type="NCBIfam" id="NF001413">
    <property type="entry name" value="PRK00290.1"/>
    <property type="match status" value="1"/>
</dbReference>
<dbReference type="NCBIfam" id="NF003520">
    <property type="entry name" value="PRK05183.1"/>
    <property type="match status" value="1"/>
</dbReference>
<dbReference type="NCBIfam" id="TIGR02350">
    <property type="entry name" value="prok_dnaK"/>
    <property type="match status" value="1"/>
</dbReference>
<dbReference type="PANTHER" id="PTHR19375">
    <property type="entry name" value="HEAT SHOCK PROTEIN 70KDA"/>
    <property type="match status" value="1"/>
</dbReference>
<dbReference type="Pfam" id="PF00012">
    <property type="entry name" value="HSP70"/>
    <property type="match status" value="1"/>
</dbReference>
<dbReference type="PRINTS" id="PR00301">
    <property type="entry name" value="HEATSHOCK70"/>
</dbReference>
<dbReference type="SUPFAM" id="SSF53067">
    <property type="entry name" value="Actin-like ATPase domain"/>
    <property type="match status" value="2"/>
</dbReference>
<dbReference type="SUPFAM" id="SSF100934">
    <property type="entry name" value="Heat shock protein 70kD (HSP70), C-terminal subdomain"/>
    <property type="match status" value="1"/>
</dbReference>
<dbReference type="SUPFAM" id="SSF100920">
    <property type="entry name" value="Heat shock protein 70kD (HSP70), peptide-binding domain"/>
    <property type="match status" value="1"/>
</dbReference>
<dbReference type="PROSITE" id="PS00297">
    <property type="entry name" value="HSP70_1"/>
    <property type="match status" value="1"/>
</dbReference>
<dbReference type="PROSITE" id="PS00329">
    <property type="entry name" value="HSP70_2"/>
    <property type="match status" value="1"/>
</dbReference>
<dbReference type="PROSITE" id="PS01036">
    <property type="entry name" value="HSP70_3"/>
    <property type="match status" value="1"/>
</dbReference>
<organism>
    <name type="scientific">Campylobacter curvus (strain 525.92)</name>
    <dbReference type="NCBI Taxonomy" id="360105"/>
    <lineage>
        <taxon>Bacteria</taxon>
        <taxon>Pseudomonadati</taxon>
        <taxon>Campylobacterota</taxon>
        <taxon>Epsilonproteobacteria</taxon>
        <taxon>Campylobacterales</taxon>
        <taxon>Campylobacteraceae</taxon>
        <taxon>Campylobacter</taxon>
    </lineage>
</organism>
<feature type="chain" id="PRO_1000059529" description="Chaperone protein DnaK">
    <location>
        <begin position="1"/>
        <end position="625"/>
    </location>
</feature>
<feature type="region of interest" description="Disordered" evidence="2">
    <location>
        <begin position="598"/>
        <end position="625"/>
    </location>
</feature>
<feature type="modified residue" description="Phosphothreonine; by autocatalysis" evidence="1">
    <location>
        <position position="197"/>
    </location>
</feature>
<sequence length="625" mass="67220">MAKVIGIDLGTTNSCVSVYERGESKVIPNKEGKNTTPSVVAFTDKGEVLVGDVAKRQAVTNPEKTIYSIKRIMGLMSNEKNAQEAKARLPYHVVDRNGACAVEIAGKVYTPQEISAKILMKLKEDAEAYLGEKVVDAVITVPAYFNDSQRKATKEAGTIAGLNVLRIINEPTAAALAYGLDKKEAEKILVYDLGGGTFDVTVLETGDSVVEVLATGGNAFLGGDDFDNLIIDWLVNEFKNETGIDLKKDVMASQRLKEAAENAKKELSSAQETEINLPFITADATGPKHLVKKLTRAKFEGMIESLVAETITKINEVVKEAGLSKSDVKEVVMVGGSTRVPLVQEEVKKAFGKELNKSVNPDEVVAIGAAIQGAVIKGDVKDVLLLDVTPLSLGIETLGGVMTKIIEKGTTIPVKKNQTFSTAEDNQSAVTIHVLQGEREFARDNKSLGQFNLEGIPSAPRGVPQIEVEFDIDANGILTVSAKDKATGKAQNITISGSSGLSEDEINNMVKDAELHKEDDKKRKEAVEARNSADALVHQTEKSMNELGEKVPAEDRSNIEAALNDLKETLKDENASKEQIDAKVQALSAASHKLAEAMYKKDDNASGEQSGGKKKDDDVIDAEVE</sequence>
<protein>
    <recommendedName>
        <fullName evidence="1">Chaperone protein DnaK</fullName>
    </recommendedName>
    <alternativeName>
        <fullName evidence="1">HSP70</fullName>
    </alternativeName>
    <alternativeName>
        <fullName evidence="1">Heat shock 70 kDa protein</fullName>
    </alternativeName>
    <alternativeName>
        <fullName evidence="1">Heat shock protein 70</fullName>
    </alternativeName>
</protein>
<reference key="1">
    <citation type="submission" date="2007-07" db="EMBL/GenBank/DDBJ databases">
        <title>Genome sequence of Campylobacter curvus 525.92 isolated from human feces.</title>
        <authorList>
            <person name="Fouts D.E."/>
            <person name="Mongodin E.F."/>
            <person name="Puiu D."/>
            <person name="Sebastian Y."/>
            <person name="Miller W.G."/>
            <person name="Mandrell R.E."/>
            <person name="Lastovica A.J."/>
            <person name="Nelson K.E."/>
        </authorList>
    </citation>
    <scope>NUCLEOTIDE SEQUENCE [LARGE SCALE GENOMIC DNA]</scope>
    <source>
        <strain>525.92</strain>
    </source>
</reference>
<accession>A7GXU4</accession>
<evidence type="ECO:0000255" key="1">
    <source>
        <dbReference type="HAMAP-Rule" id="MF_00332"/>
    </source>
</evidence>
<evidence type="ECO:0000256" key="2">
    <source>
        <dbReference type="SAM" id="MobiDB-lite"/>
    </source>
</evidence>
<comment type="function">
    <text evidence="1">Acts as a chaperone.</text>
</comment>
<comment type="induction">
    <text evidence="1">By stress conditions e.g. heat shock.</text>
</comment>
<comment type="similarity">
    <text evidence="1">Belongs to the heat shock protein 70 family.</text>
</comment>
<gene>
    <name evidence="1" type="primary">dnaK</name>
    <name type="ordered locus">Ccur92_07320</name>
    <name type="ORF">CCV52592_0148</name>
</gene>